<organism>
    <name type="scientific">Yersinia enterocolitica serotype O:8 / biotype 1B (strain NCTC 13174 / 8081)</name>
    <dbReference type="NCBI Taxonomy" id="393305"/>
    <lineage>
        <taxon>Bacteria</taxon>
        <taxon>Pseudomonadati</taxon>
        <taxon>Pseudomonadota</taxon>
        <taxon>Gammaproteobacteria</taxon>
        <taxon>Enterobacterales</taxon>
        <taxon>Yersiniaceae</taxon>
        <taxon>Yersinia</taxon>
    </lineage>
</organism>
<protein>
    <recommendedName>
        <fullName evidence="1">Dual-specificity RNA methyltransferase RlmN</fullName>
        <ecNumber evidence="1">2.1.1.192</ecNumber>
    </recommendedName>
    <alternativeName>
        <fullName evidence="1">23S rRNA (adenine(2503)-C(2))-methyltransferase</fullName>
    </alternativeName>
    <alternativeName>
        <fullName evidence="1">23S rRNA m2A2503 methyltransferase</fullName>
    </alternativeName>
    <alternativeName>
        <fullName evidence="1">Ribosomal RNA large subunit methyltransferase N</fullName>
    </alternativeName>
    <alternativeName>
        <fullName evidence="1">tRNA (adenine(37)-C(2))-methyltransferase</fullName>
    </alternativeName>
    <alternativeName>
        <fullName evidence="1">tRNA m2A37 methyltransferase</fullName>
    </alternativeName>
</protein>
<keyword id="KW-0004">4Fe-4S</keyword>
<keyword id="KW-0963">Cytoplasm</keyword>
<keyword id="KW-1015">Disulfide bond</keyword>
<keyword id="KW-0408">Iron</keyword>
<keyword id="KW-0411">Iron-sulfur</keyword>
<keyword id="KW-0479">Metal-binding</keyword>
<keyword id="KW-0489">Methyltransferase</keyword>
<keyword id="KW-0698">rRNA processing</keyword>
<keyword id="KW-0949">S-adenosyl-L-methionine</keyword>
<keyword id="KW-0808">Transferase</keyword>
<keyword id="KW-0819">tRNA processing</keyword>
<gene>
    <name evidence="1" type="primary">rlmN</name>
    <name type="ordered locus">YE1070</name>
</gene>
<name>RLMN_YERE8</name>
<sequence length="398" mass="44137">MSEQLLTASMPIDAAPLSDHAVATAAPATSKINLLDLNRQQMREFFAEMGEKPFRADQVMKWMYHYCYDDFEQMTDINKGLRAKLQRVAEIRAPEVAEEQRSTDGTIKWAIKVGDQQVETVYIPEGDRATLCVSSQVGCALECKFCSTAQQGFNRNLRVSEIIGQVWRAAKIIGAVKATGIRPITNVVMMGMGEPLLNLNNVVPAMDIMMDDFGFGLSKRRVTLSTSGVVPALDKLGDMIDVALAISLHAPTDDIRDEIVPINRKYNIETFLAAVRRYLAKSNANGGRVTVEYVMLDHINDSTEQAHQLAECLKDTPCKINLIPWNPFPGAPYGRSSNSRVDRFSKVLMEYGFTTIVRKTRGDDIDAACGQLAGEVIDRTKRTLKKKMAGEPIAIKTV</sequence>
<evidence type="ECO:0000255" key="1">
    <source>
        <dbReference type="HAMAP-Rule" id="MF_01849"/>
    </source>
</evidence>
<evidence type="ECO:0000255" key="2">
    <source>
        <dbReference type="PROSITE-ProRule" id="PRU01266"/>
    </source>
</evidence>
<accession>A1JKR9</accession>
<comment type="function">
    <text evidence="1">Specifically methylates position 2 of adenine 2503 in 23S rRNA and position 2 of adenine 37 in tRNAs. m2A2503 modification seems to play a crucial role in the proofreading step occurring at the peptidyl transferase center and thus would serve to optimize ribosomal fidelity.</text>
</comment>
<comment type="catalytic activity">
    <reaction evidence="1">
        <text>adenosine(2503) in 23S rRNA + 2 reduced [2Fe-2S]-[ferredoxin] + 2 S-adenosyl-L-methionine = 2-methyladenosine(2503) in 23S rRNA + 5'-deoxyadenosine + L-methionine + 2 oxidized [2Fe-2S]-[ferredoxin] + S-adenosyl-L-homocysteine</text>
        <dbReference type="Rhea" id="RHEA:42916"/>
        <dbReference type="Rhea" id="RHEA-COMP:10000"/>
        <dbReference type="Rhea" id="RHEA-COMP:10001"/>
        <dbReference type="Rhea" id="RHEA-COMP:10152"/>
        <dbReference type="Rhea" id="RHEA-COMP:10282"/>
        <dbReference type="ChEBI" id="CHEBI:17319"/>
        <dbReference type="ChEBI" id="CHEBI:33737"/>
        <dbReference type="ChEBI" id="CHEBI:33738"/>
        <dbReference type="ChEBI" id="CHEBI:57844"/>
        <dbReference type="ChEBI" id="CHEBI:57856"/>
        <dbReference type="ChEBI" id="CHEBI:59789"/>
        <dbReference type="ChEBI" id="CHEBI:74411"/>
        <dbReference type="ChEBI" id="CHEBI:74497"/>
        <dbReference type="EC" id="2.1.1.192"/>
    </reaction>
</comment>
<comment type="catalytic activity">
    <reaction evidence="1">
        <text>adenosine(37) in tRNA + 2 reduced [2Fe-2S]-[ferredoxin] + 2 S-adenosyl-L-methionine = 2-methyladenosine(37) in tRNA + 5'-deoxyadenosine + L-methionine + 2 oxidized [2Fe-2S]-[ferredoxin] + S-adenosyl-L-homocysteine</text>
        <dbReference type="Rhea" id="RHEA:43332"/>
        <dbReference type="Rhea" id="RHEA-COMP:10000"/>
        <dbReference type="Rhea" id="RHEA-COMP:10001"/>
        <dbReference type="Rhea" id="RHEA-COMP:10162"/>
        <dbReference type="Rhea" id="RHEA-COMP:10485"/>
        <dbReference type="ChEBI" id="CHEBI:17319"/>
        <dbReference type="ChEBI" id="CHEBI:33737"/>
        <dbReference type="ChEBI" id="CHEBI:33738"/>
        <dbReference type="ChEBI" id="CHEBI:57844"/>
        <dbReference type="ChEBI" id="CHEBI:57856"/>
        <dbReference type="ChEBI" id="CHEBI:59789"/>
        <dbReference type="ChEBI" id="CHEBI:74411"/>
        <dbReference type="ChEBI" id="CHEBI:74497"/>
        <dbReference type="EC" id="2.1.1.192"/>
    </reaction>
</comment>
<comment type="cofactor">
    <cofactor evidence="1">
        <name>[4Fe-4S] cluster</name>
        <dbReference type="ChEBI" id="CHEBI:49883"/>
    </cofactor>
    <text evidence="1">Binds 1 [4Fe-4S] cluster. The cluster is coordinated with 3 cysteines and an exchangeable S-adenosyl-L-methionine.</text>
</comment>
<comment type="subcellular location">
    <subcellularLocation>
        <location evidence="1">Cytoplasm</location>
    </subcellularLocation>
</comment>
<comment type="miscellaneous">
    <text evidence="1">Reaction proceeds by a ping-pong mechanism involving intermediate methylation of a conserved cysteine residue.</text>
</comment>
<comment type="similarity">
    <text evidence="1">Belongs to the radical SAM superfamily. RlmN family.</text>
</comment>
<reference key="1">
    <citation type="journal article" date="2006" name="PLoS Genet.">
        <title>The complete genome sequence and comparative genome analysis of the high pathogenicity Yersinia enterocolitica strain 8081.</title>
        <authorList>
            <person name="Thomson N.R."/>
            <person name="Howard S."/>
            <person name="Wren B.W."/>
            <person name="Holden M.T.G."/>
            <person name="Crossman L."/>
            <person name="Challis G.L."/>
            <person name="Churcher C."/>
            <person name="Mungall K."/>
            <person name="Brooks K."/>
            <person name="Chillingworth T."/>
            <person name="Feltwell T."/>
            <person name="Abdellah Z."/>
            <person name="Hauser H."/>
            <person name="Jagels K."/>
            <person name="Maddison M."/>
            <person name="Moule S."/>
            <person name="Sanders M."/>
            <person name="Whitehead S."/>
            <person name="Quail M.A."/>
            <person name="Dougan G."/>
            <person name="Parkhill J."/>
            <person name="Prentice M.B."/>
        </authorList>
    </citation>
    <scope>NUCLEOTIDE SEQUENCE [LARGE SCALE GENOMIC DNA]</scope>
    <source>
        <strain>NCTC 13174 / 8081</strain>
    </source>
</reference>
<feature type="chain" id="PRO_0000350537" description="Dual-specificity RNA methyltransferase RlmN">
    <location>
        <begin position="1"/>
        <end position="398"/>
    </location>
</feature>
<feature type="domain" description="Radical SAM core" evidence="2">
    <location>
        <begin position="125"/>
        <end position="364"/>
    </location>
</feature>
<feature type="active site" description="Proton acceptor" evidence="1">
    <location>
        <position position="119"/>
    </location>
</feature>
<feature type="active site" description="S-methylcysteine intermediate" evidence="1">
    <location>
        <position position="369"/>
    </location>
</feature>
<feature type="binding site" evidence="1">
    <location>
        <position position="139"/>
    </location>
    <ligand>
        <name>[4Fe-4S] cluster</name>
        <dbReference type="ChEBI" id="CHEBI:49883"/>
        <note>4Fe-4S-S-AdoMet</note>
    </ligand>
</feature>
<feature type="binding site" evidence="1">
    <location>
        <position position="143"/>
    </location>
    <ligand>
        <name>[4Fe-4S] cluster</name>
        <dbReference type="ChEBI" id="CHEBI:49883"/>
        <note>4Fe-4S-S-AdoMet</note>
    </ligand>
</feature>
<feature type="binding site" evidence="1">
    <location>
        <position position="146"/>
    </location>
    <ligand>
        <name>[4Fe-4S] cluster</name>
        <dbReference type="ChEBI" id="CHEBI:49883"/>
        <note>4Fe-4S-S-AdoMet</note>
    </ligand>
</feature>
<feature type="binding site" evidence="1">
    <location>
        <begin position="193"/>
        <end position="194"/>
    </location>
    <ligand>
        <name>S-adenosyl-L-methionine</name>
        <dbReference type="ChEBI" id="CHEBI:59789"/>
    </ligand>
</feature>
<feature type="binding site" evidence="1">
    <location>
        <position position="225"/>
    </location>
    <ligand>
        <name>S-adenosyl-L-methionine</name>
        <dbReference type="ChEBI" id="CHEBI:59789"/>
    </ligand>
</feature>
<feature type="binding site" evidence="1">
    <location>
        <begin position="247"/>
        <end position="249"/>
    </location>
    <ligand>
        <name>S-adenosyl-L-methionine</name>
        <dbReference type="ChEBI" id="CHEBI:59789"/>
    </ligand>
</feature>
<feature type="binding site" evidence="1">
    <location>
        <position position="326"/>
    </location>
    <ligand>
        <name>S-adenosyl-L-methionine</name>
        <dbReference type="ChEBI" id="CHEBI:59789"/>
    </ligand>
</feature>
<feature type="disulfide bond" description="(transient)" evidence="1">
    <location>
        <begin position="132"/>
        <end position="369"/>
    </location>
</feature>
<proteinExistence type="inferred from homology"/>
<dbReference type="EC" id="2.1.1.192" evidence="1"/>
<dbReference type="EMBL" id="AM286415">
    <property type="protein sequence ID" value="CAL11167.1"/>
    <property type="molecule type" value="Genomic_DNA"/>
</dbReference>
<dbReference type="RefSeq" id="YP_001005402.1">
    <property type="nucleotide sequence ID" value="NC_008800.1"/>
</dbReference>
<dbReference type="SMR" id="A1JKR9"/>
<dbReference type="KEGG" id="yen:YE1070"/>
<dbReference type="PATRIC" id="fig|393305.7.peg.1167"/>
<dbReference type="eggNOG" id="COG0820">
    <property type="taxonomic scope" value="Bacteria"/>
</dbReference>
<dbReference type="HOGENOM" id="CLU_029101_0_0_6"/>
<dbReference type="OrthoDB" id="9793973at2"/>
<dbReference type="Proteomes" id="UP000000642">
    <property type="component" value="Chromosome"/>
</dbReference>
<dbReference type="GO" id="GO:0005737">
    <property type="term" value="C:cytoplasm"/>
    <property type="evidence" value="ECO:0007669"/>
    <property type="project" value="UniProtKB-SubCell"/>
</dbReference>
<dbReference type="GO" id="GO:0051539">
    <property type="term" value="F:4 iron, 4 sulfur cluster binding"/>
    <property type="evidence" value="ECO:0007669"/>
    <property type="project" value="UniProtKB-UniRule"/>
</dbReference>
<dbReference type="GO" id="GO:0046872">
    <property type="term" value="F:metal ion binding"/>
    <property type="evidence" value="ECO:0007669"/>
    <property type="project" value="UniProtKB-KW"/>
</dbReference>
<dbReference type="GO" id="GO:0070040">
    <property type="term" value="F:rRNA (adenine(2503)-C2-)-methyltransferase activity"/>
    <property type="evidence" value="ECO:0007669"/>
    <property type="project" value="UniProtKB-UniRule"/>
</dbReference>
<dbReference type="GO" id="GO:0019843">
    <property type="term" value="F:rRNA binding"/>
    <property type="evidence" value="ECO:0007669"/>
    <property type="project" value="UniProtKB-UniRule"/>
</dbReference>
<dbReference type="GO" id="GO:0002935">
    <property type="term" value="F:tRNA (adenine(37)-C2)-methyltransferase activity"/>
    <property type="evidence" value="ECO:0007669"/>
    <property type="project" value="UniProtKB-UniRule"/>
</dbReference>
<dbReference type="GO" id="GO:0000049">
    <property type="term" value="F:tRNA binding"/>
    <property type="evidence" value="ECO:0007669"/>
    <property type="project" value="UniProtKB-UniRule"/>
</dbReference>
<dbReference type="GO" id="GO:0070475">
    <property type="term" value="P:rRNA base methylation"/>
    <property type="evidence" value="ECO:0007669"/>
    <property type="project" value="UniProtKB-UniRule"/>
</dbReference>
<dbReference type="GO" id="GO:0030488">
    <property type="term" value="P:tRNA methylation"/>
    <property type="evidence" value="ECO:0007669"/>
    <property type="project" value="UniProtKB-UniRule"/>
</dbReference>
<dbReference type="CDD" id="cd01335">
    <property type="entry name" value="Radical_SAM"/>
    <property type="match status" value="1"/>
</dbReference>
<dbReference type="FunFam" id="1.10.150.530:FF:000001">
    <property type="entry name" value="Dual-specificity RNA methyltransferase RlmN"/>
    <property type="match status" value="1"/>
</dbReference>
<dbReference type="FunFam" id="3.20.20.70:FF:000008">
    <property type="entry name" value="Dual-specificity RNA methyltransferase RlmN"/>
    <property type="match status" value="1"/>
</dbReference>
<dbReference type="Gene3D" id="1.10.150.530">
    <property type="match status" value="1"/>
</dbReference>
<dbReference type="Gene3D" id="3.20.20.70">
    <property type="entry name" value="Aldolase class I"/>
    <property type="match status" value="1"/>
</dbReference>
<dbReference type="HAMAP" id="MF_01849">
    <property type="entry name" value="RNA_methyltr_RlmN"/>
    <property type="match status" value="1"/>
</dbReference>
<dbReference type="InterPro" id="IPR013785">
    <property type="entry name" value="Aldolase_TIM"/>
</dbReference>
<dbReference type="InterPro" id="IPR040072">
    <property type="entry name" value="Methyltransferase_A"/>
</dbReference>
<dbReference type="InterPro" id="IPR048641">
    <property type="entry name" value="RlmN_N"/>
</dbReference>
<dbReference type="InterPro" id="IPR027492">
    <property type="entry name" value="RNA_MTrfase_RlmN"/>
</dbReference>
<dbReference type="InterPro" id="IPR004383">
    <property type="entry name" value="rRNA_lsu_MTrfase_RlmN/Cfr"/>
</dbReference>
<dbReference type="InterPro" id="IPR007197">
    <property type="entry name" value="rSAM"/>
</dbReference>
<dbReference type="NCBIfam" id="NF008396">
    <property type="entry name" value="PRK11194.1"/>
    <property type="match status" value="1"/>
</dbReference>
<dbReference type="NCBIfam" id="TIGR00048">
    <property type="entry name" value="rRNA_mod_RlmN"/>
    <property type="match status" value="1"/>
</dbReference>
<dbReference type="PANTHER" id="PTHR30544">
    <property type="entry name" value="23S RRNA METHYLTRANSFERASE"/>
    <property type="match status" value="1"/>
</dbReference>
<dbReference type="PANTHER" id="PTHR30544:SF5">
    <property type="entry name" value="RADICAL SAM CORE DOMAIN-CONTAINING PROTEIN"/>
    <property type="match status" value="1"/>
</dbReference>
<dbReference type="Pfam" id="PF04055">
    <property type="entry name" value="Radical_SAM"/>
    <property type="match status" value="1"/>
</dbReference>
<dbReference type="Pfam" id="PF21016">
    <property type="entry name" value="RlmN_N"/>
    <property type="match status" value="1"/>
</dbReference>
<dbReference type="PIRSF" id="PIRSF006004">
    <property type="entry name" value="CHP00048"/>
    <property type="match status" value="1"/>
</dbReference>
<dbReference type="SFLD" id="SFLDF00275">
    <property type="entry name" value="adenosine_C2_methyltransferase"/>
    <property type="match status" value="1"/>
</dbReference>
<dbReference type="SFLD" id="SFLDS00029">
    <property type="entry name" value="Radical_SAM"/>
    <property type="match status" value="1"/>
</dbReference>
<dbReference type="SUPFAM" id="SSF102114">
    <property type="entry name" value="Radical SAM enzymes"/>
    <property type="match status" value="1"/>
</dbReference>
<dbReference type="PROSITE" id="PS51918">
    <property type="entry name" value="RADICAL_SAM"/>
    <property type="match status" value="1"/>
</dbReference>